<dbReference type="EC" id="4.2.1.9" evidence="1"/>
<dbReference type="EMBL" id="AP009247">
    <property type="protein sequence ID" value="BAF61604.1"/>
    <property type="molecule type" value="Genomic_DNA"/>
</dbReference>
<dbReference type="RefSeq" id="WP_011929874.1">
    <property type="nucleotide sequence ID" value="NC_009465.1"/>
</dbReference>
<dbReference type="SMR" id="A5CWQ3"/>
<dbReference type="STRING" id="412965.COSY_0485"/>
<dbReference type="KEGG" id="vok:COSY_0485"/>
<dbReference type="eggNOG" id="COG0129">
    <property type="taxonomic scope" value="Bacteria"/>
</dbReference>
<dbReference type="HOGENOM" id="CLU_014271_4_2_6"/>
<dbReference type="OrthoDB" id="9807077at2"/>
<dbReference type="UniPathway" id="UPA00047">
    <property type="reaction ID" value="UER00057"/>
</dbReference>
<dbReference type="UniPathway" id="UPA00049">
    <property type="reaction ID" value="UER00061"/>
</dbReference>
<dbReference type="Proteomes" id="UP000000247">
    <property type="component" value="Chromosome"/>
</dbReference>
<dbReference type="GO" id="GO:0051537">
    <property type="term" value="F:2 iron, 2 sulfur cluster binding"/>
    <property type="evidence" value="ECO:0007669"/>
    <property type="project" value="UniProtKB-UniRule"/>
</dbReference>
<dbReference type="GO" id="GO:0004160">
    <property type="term" value="F:dihydroxy-acid dehydratase activity"/>
    <property type="evidence" value="ECO:0007669"/>
    <property type="project" value="UniProtKB-UniRule"/>
</dbReference>
<dbReference type="GO" id="GO:0000287">
    <property type="term" value="F:magnesium ion binding"/>
    <property type="evidence" value="ECO:0007669"/>
    <property type="project" value="UniProtKB-UniRule"/>
</dbReference>
<dbReference type="GO" id="GO:0009097">
    <property type="term" value="P:isoleucine biosynthetic process"/>
    <property type="evidence" value="ECO:0007669"/>
    <property type="project" value="UniProtKB-UniRule"/>
</dbReference>
<dbReference type="GO" id="GO:0009099">
    <property type="term" value="P:L-valine biosynthetic process"/>
    <property type="evidence" value="ECO:0007669"/>
    <property type="project" value="UniProtKB-UniRule"/>
</dbReference>
<dbReference type="FunFam" id="3.50.30.80:FF:000001">
    <property type="entry name" value="Dihydroxy-acid dehydratase"/>
    <property type="match status" value="1"/>
</dbReference>
<dbReference type="Gene3D" id="3.50.30.80">
    <property type="entry name" value="IlvD/EDD C-terminal domain-like"/>
    <property type="match status" value="1"/>
</dbReference>
<dbReference type="HAMAP" id="MF_00012">
    <property type="entry name" value="IlvD"/>
    <property type="match status" value="1"/>
</dbReference>
<dbReference type="InterPro" id="IPR050165">
    <property type="entry name" value="DHAD_IlvD/Edd"/>
</dbReference>
<dbReference type="InterPro" id="IPR042096">
    <property type="entry name" value="Dihydro-acid_dehy_C"/>
</dbReference>
<dbReference type="InterPro" id="IPR004404">
    <property type="entry name" value="DihydroxyA_deHydtase"/>
</dbReference>
<dbReference type="InterPro" id="IPR020558">
    <property type="entry name" value="DiOHA_6PGluconate_deHydtase_CS"/>
</dbReference>
<dbReference type="InterPro" id="IPR056740">
    <property type="entry name" value="ILV_EDD_C"/>
</dbReference>
<dbReference type="InterPro" id="IPR000581">
    <property type="entry name" value="ILV_EDD_N"/>
</dbReference>
<dbReference type="InterPro" id="IPR037237">
    <property type="entry name" value="IlvD/EDD_N"/>
</dbReference>
<dbReference type="NCBIfam" id="TIGR00110">
    <property type="entry name" value="ilvD"/>
    <property type="match status" value="1"/>
</dbReference>
<dbReference type="NCBIfam" id="NF002068">
    <property type="entry name" value="PRK00911.1"/>
    <property type="match status" value="1"/>
</dbReference>
<dbReference type="PANTHER" id="PTHR21000">
    <property type="entry name" value="DIHYDROXY-ACID DEHYDRATASE DAD"/>
    <property type="match status" value="1"/>
</dbReference>
<dbReference type="PANTHER" id="PTHR21000:SF5">
    <property type="entry name" value="DIHYDROXY-ACID DEHYDRATASE, MITOCHONDRIAL"/>
    <property type="match status" value="1"/>
</dbReference>
<dbReference type="Pfam" id="PF24877">
    <property type="entry name" value="ILV_EDD_C"/>
    <property type="match status" value="1"/>
</dbReference>
<dbReference type="Pfam" id="PF00920">
    <property type="entry name" value="ILVD_EDD_N"/>
    <property type="match status" value="1"/>
</dbReference>
<dbReference type="SUPFAM" id="SSF143975">
    <property type="entry name" value="IlvD/EDD N-terminal domain-like"/>
    <property type="match status" value="1"/>
</dbReference>
<dbReference type="SUPFAM" id="SSF52016">
    <property type="entry name" value="LeuD/IlvD-like"/>
    <property type="match status" value="1"/>
</dbReference>
<dbReference type="PROSITE" id="PS00886">
    <property type="entry name" value="ILVD_EDD_1"/>
    <property type="match status" value="1"/>
</dbReference>
<dbReference type="PROSITE" id="PS00887">
    <property type="entry name" value="ILVD_EDD_2"/>
    <property type="match status" value="1"/>
</dbReference>
<reference key="1">
    <citation type="journal article" date="2007" name="Curr. Biol.">
        <title>Reduced genome of the thioautotrophic intracellular symbiont in a deep-sea clam, Calyptogena okutanii.</title>
        <authorList>
            <person name="Kuwahara H."/>
            <person name="Yoshida T."/>
            <person name="Takaki Y."/>
            <person name="Shimamura S."/>
            <person name="Nishi S."/>
            <person name="Harada M."/>
            <person name="Matsuyama K."/>
            <person name="Takishita K."/>
            <person name="Kawato M."/>
            <person name="Uematsu K."/>
            <person name="Fujiwara Y."/>
            <person name="Sato T."/>
            <person name="Kato C."/>
            <person name="Kitagawa M."/>
            <person name="Kato I."/>
            <person name="Maruyama T."/>
        </authorList>
    </citation>
    <scope>NUCLEOTIDE SEQUENCE [LARGE SCALE GENOMIC DNA]</scope>
    <source>
        <strain>HA</strain>
    </source>
</reference>
<evidence type="ECO:0000255" key="1">
    <source>
        <dbReference type="HAMAP-Rule" id="MF_00012"/>
    </source>
</evidence>
<sequence>MCIPRKYSSQVVDGFERAPSRAMLYPIGFKKDDFSKPQVGIASTWSMVTPCNMHINKLADKAEKGINNAGGKGVIFNTITISDGISMGSEGMKYSLVSREVIADSIETVVGCQGFDGVVAIGGCDKNMPGCIIGLARLNRPSIFVYGGTIQPGKNRTDVVSVFEAVGRFSNHEIDEIELENIEKTAVTGAGSCGGMYTANTMASAIEALGMSLPNSSAQNAISDDKNNDCIQAGEAILTLLNKDIKPRDIMTMKAFENAITVIIALGGSTNAVLHLIAMANAAEVNLKIDDFTRIGKKVPVIADLKPSGKYMMSELVEIGGTLPLMKMLLDAGLLHGDCMTVTGKTLAKNLKNVQSYADSQEIIRALDNPIKKDSHLRILRGNLAINGAVAKITGKEGSSFKGTAKCFSHEEGALKAILNDQIKAGNVIVIRYEGPVGGPGMREMLAPTSAVMGKGLGGKIALITDGRFSGGTHGFVVGHITPEAFKGGVLAVVEDGDEIIIDAQNNVLELLVDQAIIDKRLSKWTQPKPNYTKGVLAKFAKLAKSASEGAVTD</sequence>
<proteinExistence type="inferred from homology"/>
<organism>
    <name type="scientific">Vesicomyosocius okutanii subsp. Calyptogena okutanii (strain HA)</name>
    <dbReference type="NCBI Taxonomy" id="412965"/>
    <lineage>
        <taxon>Bacteria</taxon>
        <taxon>Pseudomonadati</taxon>
        <taxon>Pseudomonadota</taxon>
        <taxon>Gammaproteobacteria</taxon>
        <taxon>Candidatus Pseudothioglobaceae</taxon>
        <taxon>Candidatus Vesicomyosocius</taxon>
    </lineage>
</organism>
<protein>
    <recommendedName>
        <fullName evidence="1">Dihydroxy-acid dehydratase</fullName>
        <shortName evidence="1">DAD</shortName>
        <ecNumber evidence="1">4.2.1.9</ecNumber>
    </recommendedName>
</protein>
<gene>
    <name evidence="1" type="primary">ilvD</name>
    <name type="ordered locus">COSY_0485</name>
</gene>
<name>ILVD_VESOH</name>
<feature type="chain" id="PRO_1000089427" description="Dihydroxy-acid dehydratase">
    <location>
        <begin position="1"/>
        <end position="554"/>
    </location>
</feature>
<feature type="active site" description="Proton acceptor" evidence="1">
    <location>
        <position position="470"/>
    </location>
</feature>
<feature type="binding site" evidence="1">
    <location>
        <position position="51"/>
    </location>
    <ligand>
        <name>[2Fe-2S] cluster</name>
        <dbReference type="ChEBI" id="CHEBI:190135"/>
    </ligand>
</feature>
<feature type="binding site" evidence="1">
    <location>
        <position position="83"/>
    </location>
    <ligand>
        <name>Mg(2+)</name>
        <dbReference type="ChEBI" id="CHEBI:18420"/>
    </ligand>
</feature>
<feature type="binding site" evidence="1">
    <location>
        <position position="124"/>
    </location>
    <ligand>
        <name>[2Fe-2S] cluster</name>
        <dbReference type="ChEBI" id="CHEBI:190135"/>
    </ligand>
</feature>
<feature type="binding site" evidence="1">
    <location>
        <position position="125"/>
    </location>
    <ligand>
        <name>Mg(2+)</name>
        <dbReference type="ChEBI" id="CHEBI:18420"/>
    </ligand>
</feature>
<feature type="binding site" description="via carbamate group" evidence="1">
    <location>
        <position position="126"/>
    </location>
    <ligand>
        <name>Mg(2+)</name>
        <dbReference type="ChEBI" id="CHEBI:18420"/>
    </ligand>
</feature>
<feature type="binding site" evidence="1">
    <location>
        <position position="193"/>
    </location>
    <ligand>
        <name>[2Fe-2S] cluster</name>
        <dbReference type="ChEBI" id="CHEBI:190135"/>
    </ligand>
</feature>
<feature type="binding site" evidence="1">
    <location>
        <position position="444"/>
    </location>
    <ligand>
        <name>Mg(2+)</name>
        <dbReference type="ChEBI" id="CHEBI:18420"/>
    </ligand>
</feature>
<feature type="modified residue" description="N6-carboxylysine" evidence="1">
    <location>
        <position position="126"/>
    </location>
</feature>
<accession>A5CWQ3</accession>
<comment type="function">
    <text evidence="1">Functions in the biosynthesis of branched-chain amino acids. Catalyzes the dehydration of (2R,3R)-2,3-dihydroxy-3-methylpentanoate (2,3-dihydroxy-3-methylvalerate) into 2-oxo-3-methylpentanoate (2-oxo-3-methylvalerate) and of (2R)-2,3-dihydroxy-3-methylbutanoate (2,3-dihydroxyisovalerate) into 2-oxo-3-methylbutanoate (2-oxoisovalerate), the penultimate precursor to L-isoleucine and L-valine, respectively.</text>
</comment>
<comment type="catalytic activity">
    <reaction evidence="1">
        <text>(2R)-2,3-dihydroxy-3-methylbutanoate = 3-methyl-2-oxobutanoate + H2O</text>
        <dbReference type="Rhea" id="RHEA:24809"/>
        <dbReference type="ChEBI" id="CHEBI:11851"/>
        <dbReference type="ChEBI" id="CHEBI:15377"/>
        <dbReference type="ChEBI" id="CHEBI:49072"/>
        <dbReference type="EC" id="4.2.1.9"/>
    </reaction>
    <physiologicalReaction direction="left-to-right" evidence="1">
        <dbReference type="Rhea" id="RHEA:24810"/>
    </physiologicalReaction>
</comment>
<comment type="catalytic activity">
    <reaction evidence="1">
        <text>(2R,3R)-2,3-dihydroxy-3-methylpentanoate = (S)-3-methyl-2-oxopentanoate + H2O</text>
        <dbReference type="Rhea" id="RHEA:27694"/>
        <dbReference type="ChEBI" id="CHEBI:15377"/>
        <dbReference type="ChEBI" id="CHEBI:35146"/>
        <dbReference type="ChEBI" id="CHEBI:49258"/>
        <dbReference type="EC" id="4.2.1.9"/>
    </reaction>
    <physiologicalReaction direction="left-to-right" evidence="1">
        <dbReference type="Rhea" id="RHEA:27695"/>
    </physiologicalReaction>
</comment>
<comment type="cofactor">
    <cofactor evidence="1">
        <name>[2Fe-2S] cluster</name>
        <dbReference type="ChEBI" id="CHEBI:190135"/>
    </cofactor>
    <text evidence="1">Binds 1 [2Fe-2S] cluster per subunit. This cluster acts as a Lewis acid cofactor.</text>
</comment>
<comment type="cofactor">
    <cofactor evidence="1">
        <name>Mg(2+)</name>
        <dbReference type="ChEBI" id="CHEBI:18420"/>
    </cofactor>
</comment>
<comment type="pathway">
    <text evidence="1">Amino-acid biosynthesis; L-isoleucine biosynthesis; L-isoleucine from 2-oxobutanoate: step 3/4.</text>
</comment>
<comment type="pathway">
    <text evidence="1">Amino-acid biosynthesis; L-valine biosynthesis; L-valine from pyruvate: step 3/4.</text>
</comment>
<comment type="subunit">
    <text evidence="1">Homodimer.</text>
</comment>
<comment type="similarity">
    <text evidence="1">Belongs to the IlvD/Edd family.</text>
</comment>
<keyword id="KW-0001">2Fe-2S</keyword>
<keyword id="KW-0028">Amino-acid biosynthesis</keyword>
<keyword id="KW-0100">Branched-chain amino acid biosynthesis</keyword>
<keyword id="KW-0408">Iron</keyword>
<keyword id="KW-0411">Iron-sulfur</keyword>
<keyword id="KW-0456">Lyase</keyword>
<keyword id="KW-0460">Magnesium</keyword>
<keyword id="KW-0479">Metal-binding</keyword>
<keyword id="KW-1185">Reference proteome</keyword>